<organism>
    <name type="scientific">Campylobacter jejuni subsp. doylei (strain ATCC BAA-1458 / RM4099 / 269.97)</name>
    <dbReference type="NCBI Taxonomy" id="360109"/>
    <lineage>
        <taxon>Bacteria</taxon>
        <taxon>Pseudomonadati</taxon>
        <taxon>Campylobacterota</taxon>
        <taxon>Epsilonproteobacteria</taxon>
        <taxon>Campylobacterales</taxon>
        <taxon>Campylobacteraceae</taxon>
        <taxon>Campylobacter</taxon>
    </lineage>
</organism>
<evidence type="ECO:0000255" key="1">
    <source>
        <dbReference type="HAMAP-Rule" id="MF_01694"/>
    </source>
</evidence>
<evidence type="ECO:0000255" key="2">
    <source>
        <dbReference type="PROSITE-ProRule" id="PRU01266"/>
    </source>
</evidence>
<name>BIOB_CAMJD</name>
<proteinExistence type="inferred from homology"/>
<comment type="function">
    <text evidence="1">Catalyzes the conversion of dethiobiotin (DTB) to biotin by the insertion of a sulfur atom into dethiobiotin via a radical-based mechanism.</text>
</comment>
<comment type="catalytic activity">
    <reaction evidence="1">
        <text>(4R,5S)-dethiobiotin + (sulfur carrier)-SH + 2 reduced [2Fe-2S]-[ferredoxin] + 2 S-adenosyl-L-methionine = (sulfur carrier)-H + biotin + 2 5'-deoxyadenosine + 2 L-methionine + 2 oxidized [2Fe-2S]-[ferredoxin]</text>
        <dbReference type="Rhea" id="RHEA:22060"/>
        <dbReference type="Rhea" id="RHEA-COMP:10000"/>
        <dbReference type="Rhea" id="RHEA-COMP:10001"/>
        <dbReference type="Rhea" id="RHEA-COMP:14737"/>
        <dbReference type="Rhea" id="RHEA-COMP:14739"/>
        <dbReference type="ChEBI" id="CHEBI:17319"/>
        <dbReference type="ChEBI" id="CHEBI:29917"/>
        <dbReference type="ChEBI" id="CHEBI:33737"/>
        <dbReference type="ChEBI" id="CHEBI:33738"/>
        <dbReference type="ChEBI" id="CHEBI:57586"/>
        <dbReference type="ChEBI" id="CHEBI:57844"/>
        <dbReference type="ChEBI" id="CHEBI:59789"/>
        <dbReference type="ChEBI" id="CHEBI:64428"/>
        <dbReference type="ChEBI" id="CHEBI:149473"/>
        <dbReference type="EC" id="2.8.1.6"/>
    </reaction>
</comment>
<comment type="cofactor">
    <cofactor evidence="1">
        <name>[4Fe-4S] cluster</name>
        <dbReference type="ChEBI" id="CHEBI:49883"/>
    </cofactor>
    <text evidence="1">Binds 1 [4Fe-4S] cluster. The cluster is coordinated with 3 cysteines and an exchangeable S-adenosyl-L-methionine.</text>
</comment>
<comment type="cofactor">
    <cofactor evidence="1">
        <name>[2Fe-2S] cluster</name>
        <dbReference type="ChEBI" id="CHEBI:190135"/>
    </cofactor>
    <text evidence="1">Binds 1 [2Fe-2S] cluster. The cluster is coordinated with 3 cysteines and 1 arginine.</text>
</comment>
<comment type="pathway">
    <text evidence="1">Cofactor biosynthesis; biotin biosynthesis; biotin from 7,8-diaminononanoate: step 2/2.</text>
</comment>
<comment type="subunit">
    <text evidence="1">Homodimer.</text>
</comment>
<comment type="similarity">
    <text evidence="1">Belongs to the radical SAM superfamily. Biotin synthase family.</text>
</comment>
<accession>A7H632</accession>
<keyword id="KW-0001">2Fe-2S</keyword>
<keyword id="KW-0004">4Fe-4S</keyword>
<keyword id="KW-0093">Biotin biosynthesis</keyword>
<keyword id="KW-0408">Iron</keyword>
<keyword id="KW-0411">Iron-sulfur</keyword>
<keyword id="KW-0479">Metal-binding</keyword>
<keyword id="KW-0949">S-adenosyl-L-methionine</keyword>
<keyword id="KW-0808">Transferase</keyword>
<protein>
    <recommendedName>
        <fullName evidence="1">Biotin synthase</fullName>
        <ecNumber evidence="1">2.8.1.6</ecNumber>
    </recommendedName>
</protein>
<reference key="1">
    <citation type="submission" date="2007-07" db="EMBL/GenBank/DDBJ databases">
        <title>Complete genome sequence of Campylobacter jejuni subsp doylei 269.97 isolated from human blood.</title>
        <authorList>
            <person name="Fouts D.E."/>
            <person name="Mongodin E.F."/>
            <person name="Puiu D."/>
            <person name="Sebastian Y."/>
            <person name="Miller W.G."/>
            <person name="Mandrell R.E."/>
            <person name="Lastovica A.J."/>
            <person name="Nelson K.E."/>
        </authorList>
    </citation>
    <scope>NUCLEOTIDE SEQUENCE [LARGE SCALE GENOMIC DNA]</scope>
    <source>
        <strain>ATCC BAA-1458 / RM4099 / 269.97</strain>
    </source>
</reference>
<feature type="chain" id="PRO_0000381285" description="Biotin synthase">
    <location>
        <begin position="1"/>
        <end position="278"/>
    </location>
</feature>
<feature type="domain" description="Radical SAM core" evidence="2">
    <location>
        <begin position="1"/>
        <end position="227"/>
    </location>
</feature>
<feature type="binding site" evidence="1">
    <location>
        <position position="16"/>
    </location>
    <ligand>
        <name>[4Fe-4S] cluster</name>
        <dbReference type="ChEBI" id="CHEBI:49883"/>
        <note>4Fe-4S-S-AdoMet</note>
    </ligand>
</feature>
<feature type="binding site" evidence="1">
    <location>
        <position position="20"/>
    </location>
    <ligand>
        <name>[4Fe-4S] cluster</name>
        <dbReference type="ChEBI" id="CHEBI:49883"/>
        <note>4Fe-4S-S-AdoMet</note>
    </ligand>
</feature>
<feature type="binding site" evidence="1">
    <location>
        <position position="23"/>
    </location>
    <ligand>
        <name>[4Fe-4S] cluster</name>
        <dbReference type="ChEBI" id="CHEBI:49883"/>
        <note>4Fe-4S-S-AdoMet</note>
    </ligand>
</feature>
<feature type="binding site" evidence="1">
    <location>
        <position position="60"/>
    </location>
    <ligand>
        <name>[2Fe-2S] cluster</name>
        <dbReference type="ChEBI" id="CHEBI:190135"/>
    </ligand>
</feature>
<feature type="binding site" evidence="1">
    <location>
        <position position="95"/>
    </location>
    <ligand>
        <name>[2Fe-2S] cluster</name>
        <dbReference type="ChEBI" id="CHEBI:190135"/>
    </ligand>
</feature>
<feature type="binding site" evidence="1">
    <location>
        <position position="153"/>
    </location>
    <ligand>
        <name>[2Fe-2S] cluster</name>
        <dbReference type="ChEBI" id="CHEBI:190135"/>
    </ligand>
</feature>
<dbReference type="EC" id="2.8.1.6" evidence="1"/>
<dbReference type="EMBL" id="CP000768">
    <property type="protein sequence ID" value="ABS44048.1"/>
    <property type="molecule type" value="Genomic_DNA"/>
</dbReference>
<dbReference type="SMR" id="A7H632"/>
<dbReference type="KEGG" id="cjd:JJD26997_2057"/>
<dbReference type="HOGENOM" id="CLU_033172_2_1_7"/>
<dbReference type="UniPathway" id="UPA00078">
    <property type="reaction ID" value="UER00162"/>
</dbReference>
<dbReference type="Proteomes" id="UP000002302">
    <property type="component" value="Chromosome"/>
</dbReference>
<dbReference type="GO" id="GO:0051537">
    <property type="term" value="F:2 iron, 2 sulfur cluster binding"/>
    <property type="evidence" value="ECO:0007669"/>
    <property type="project" value="UniProtKB-KW"/>
</dbReference>
<dbReference type="GO" id="GO:0051539">
    <property type="term" value="F:4 iron, 4 sulfur cluster binding"/>
    <property type="evidence" value="ECO:0007669"/>
    <property type="project" value="UniProtKB-KW"/>
</dbReference>
<dbReference type="GO" id="GO:0004076">
    <property type="term" value="F:biotin synthase activity"/>
    <property type="evidence" value="ECO:0007669"/>
    <property type="project" value="UniProtKB-UniRule"/>
</dbReference>
<dbReference type="GO" id="GO:0005506">
    <property type="term" value="F:iron ion binding"/>
    <property type="evidence" value="ECO:0007669"/>
    <property type="project" value="UniProtKB-UniRule"/>
</dbReference>
<dbReference type="GO" id="GO:0009102">
    <property type="term" value="P:biotin biosynthetic process"/>
    <property type="evidence" value="ECO:0007669"/>
    <property type="project" value="UniProtKB-UniRule"/>
</dbReference>
<dbReference type="CDD" id="cd01335">
    <property type="entry name" value="Radical_SAM"/>
    <property type="match status" value="1"/>
</dbReference>
<dbReference type="Gene3D" id="3.20.20.70">
    <property type="entry name" value="Aldolase class I"/>
    <property type="match status" value="1"/>
</dbReference>
<dbReference type="HAMAP" id="MF_01694">
    <property type="entry name" value="BioB"/>
    <property type="match status" value="1"/>
</dbReference>
<dbReference type="InterPro" id="IPR013785">
    <property type="entry name" value="Aldolase_TIM"/>
</dbReference>
<dbReference type="InterPro" id="IPR010722">
    <property type="entry name" value="BATS_dom"/>
</dbReference>
<dbReference type="InterPro" id="IPR002684">
    <property type="entry name" value="Biotin_synth/BioAB"/>
</dbReference>
<dbReference type="InterPro" id="IPR024177">
    <property type="entry name" value="Biotin_synthase"/>
</dbReference>
<dbReference type="InterPro" id="IPR006638">
    <property type="entry name" value="Elp3/MiaA/NifB-like_rSAM"/>
</dbReference>
<dbReference type="InterPro" id="IPR007197">
    <property type="entry name" value="rSAM"/>
</dbReference>
<dbReference type="NCBIfam" id="TIGR00433">
    <property type="entry name" value="bioB"/>
    <property type="match status" value="1"/>
</dbReference>
<dbReference type="NCBIfam" id="NF006308">
    <property type="entry name" value="PRK08508.1"/>
    <property type="match status" value="1"/>
</dbReference>
<dbReference type="PANTHER" id="PTHR22976">
    <property type="entry name" value="BIOTIN SYNTHASE"/>
    <property type="match status" value="1"/>
</dbReference>
<dbReference type="PANTHER" id="PTHR22976:SF2">
    <property type="entry name" value="BIOTIN SYNTHASE, MITOCHONDRIAL"/>
    <property type="match status" value="1"/>
</dbReference>
<dbReference type="Pfam" id="PF06968">
    <property type="entry name" value="BATS"/>
    <property type="match status" value="1"/>
</dbReference>
<dbReference type="Pfam" id="PF04055">
    <property type="entry name" value="Radical_SAM"/>
    <property type="match status" value="1"/>
</dbReference>
<dbReference type="PIRSF" id="PIRSF001619">
    <property type="entry name" value="Biotin_synth"/>
    <property type="match status" value="1"/>
</dbReference>
<dbReference type="SFLD" id="SFLDG01060">
    <property type="entry name" value="BATS_domain_containing"/>
    <property type="match status" value="1"/>
</dbReference>
<dbReference type="SFLD" id="SFLDG01278">
    <property type="entry name" value="biotin_synthase_like"/>
    <property type="match status" value="1"/>
</dbReference>
<dbReference type="SMART" id="SM00876">
    <property type="entry name" value="BATS"/>
    <property type="match status" value="1"/>
</dbReference>
<dbReference type="SMART" id="SM00729">
    <property type="entry name" value="Elp3"/>
    <property type="match status" value="1"/>
</dbReference>
<dbReference type="SUPFAM" id="SSF102114">
    <property type="entry name" value="Radical SAM enzymes"/>
    <property type="match status" value="1"/>
</dbReference>
<dbReference type="PROSITE" id="PS51918">
    <property type="entry name" value="RADICAL_SAM"/>
    <property type="match status" value="1"/>
</dbReference>
<gene>
    <name evidence="1" type="primary">bioB</name>
    <name type="ordered locus">JJD26997_2057</name>
</gene>
<sequence>MQIMLCAISNIASGNCSEDCKYCTQSAHVRTDIQKYRRKELSQIVLEAKMAKKNEALGFCLVTAGLGLDDEKLEYVCEAAKAVQKEVPNLLLIACNGMASVEQLKELKKAGIFSYNHNLETSKEFFPQICTTHTWESRFQTNLNAKEAGLMLCCGGIYGMGESEENRLSFRKSLQELQPFSTPINFFIANENLKLQTPRLSADEALKIVRDTKEALPQSVVMVAGGREVVLQERQYEIFQAGAGAIVIGDYLTTKGEEPSQDIIKLKEMGFTFASECH</sequence>